<comment type="function">
    <text evidence="1">Catalyzes a mechanistically unusual reaction, the ATP-dependent insertion of CO2 between the N7 and N8 nitrogen atoms of 7,8-diaminopelargonic acid (DAPA, also called 7,8-diammoniononanoate) to form a ureido ring.</text>
</comment>
<comment type="catalytic activity">
    <reaction evidence="1">
        <text>(7R,8S)-7,8-diammoniononanoate + CO2 + ATP = (4R,5S)-dethiobiotin + ADP + phosphate + 3 H(+)</text>
        <dbReference type="Rhea" id="RHEA:15805"/>
        <dbReference type="ChEBI" id="CHEBI:15378"/>
        <dbReference type="ChEBI" id="CHEBI:16526"/>
        <dbReference type="ChEBI" id="CHEBI:30616"/>
        <dbReference type="ChEBI" id="CHEBI:43474"/>
        <dbReference type="ChEBI" id="CHEBI:149469"/>
        <dbReference type="ChEBI" id="CHEBI:149473"/>
        <dbReference type="ChEBI" id="CHEBI:456216"/>
        <dbReference type="EC" id="6.3.3.3"/>
    </reaction>
</comment>
<comment type="cofactor">
    <cofactor evidence="1">
        <name>Mg(2+)</name>
        <dbReference type="ChEBI" id="CHEBI:18420"/>
    </cofactor>
</comment>
<comment type="pathway">
    <text evidence="1">Cofactor biosynthesis; biotin biosynthesis; biotin from 7,8-diaminononanoate: step 1/2.</text>
</comment>
<comment type="subunit">
    <text evidence="1">Homodimer.</text>
</comment>
<comment type="subcellular location">
    <subcellularLocation>
        <location evidence="1">Cytoplasm</location>
    </subcellularLocation>
</comment>
<comment type="similarity">
    <text evidence="1">Belongs to the dethiobiotin synthetase family.</text>
</comment>
<gene>
    <name evidence="1" type="primary">bioD</name>
    <name type="ordered locus">CLL_A0722</name>
</gene>
<organism>
    <name type="scientific">Clostridium botulinum (strain Eklund 17B / Type B)</name>
    <dbReference type="NCBI Taxonomy" id="935198"/>
    <lineage>
        <taxon>Bacteria</taxon>
        <taxon>Bacillati</taxon>
        <taxon>Bacillota</taxon>
        <taxon>Clostridia</taxon>
        <taxon>Eubacteriales</taxon>
        <taxon>Clostridiaceae</taxon>
        <taxon>Clostridium</taxon>
    </lineage>
</organism>
<reference key="1">
    <citation type="submission" date="2008-04" db="EMBL/GenBank/DDBJ databases">
        <title>Complete sequence of Clostridium botulinum strain Eklund.</title>
        <authorList>
            <person name="Brinkac L.M."/>
            <person name="Brown J.L."/>
            <person name="Bruce D."/>
            <person name="Detter C."/>
            <person name="Munk C."/>
            <person name="Smith L.A."/>
            <person name="Smith T.J."/>
            <person name="Sutton G."/>
            <person name="Brettin T.S."/>
        </authorList>
    </citation>
    <scope>NUCLEOTIDE SEQUENCE [LARGE SCALE GENOMIC DNA]</scope>
    <source>
        <strain>Eklund 17B / Type B</strain>
    </source>
</reference>
<dbReference type="EC" id="6.3.3.3" evidence="1"/>
<dbReference type="EMBL" id="CP001056">
    <property type="protein sequence ID" value="ACD22651.1"/>
    <property type="molecule type" value="Genomic_DNA"/>
</dbReference>
<dbReference type="SMR" id="B2TL74"/>
<dbReference type="KEGG" id="cbk:CLL_A0722"/>
<dbReference type="PATRIC" id="fig|935198.13.peg.667"/>
<dbReference type="HOGENOM" id="CLU_072551_3_0_9"/>
<dbReference type="UniPathway" id="UPA00078">
    <property type="reaction ID" value="UER00161"/>
</dbReference>
<dbReference type="Proteomes" id="UP000001195">
    <property type="component" value="Chromosome"/>
</dbReference>
<dbReference type="GO" id="GO:0005829">
    <property type="term" value="C:cytosol"/>
    <property type="evidence" value="ECO:0007669"/>
    <property type="project" value="TreeGrafter"/>
</dbReference>
<dbReference type="GO" id="GO:0005524">
    <property type="term" value="F:ATP binding"/>
    <property type="evidence" value="ECO:0007669"/>
    <property type="project" value="UniProtKB-UniRule"/>
</dbReference>
<dbReference type="GO" id="GO:0004141">
    <property type="term" value="F:dethiobiotin synthase activity"/>
    <property type="evidence" value="ECO:0007669"/>
    <property type="project" value="UniProtKB-UniRule"/>
</dbReference>
<dbReference type="GO" id="GO:0000287">
    <property type="term" value="F:magnesium ion binding"/>
    <property type="evidence" value="ECO:0007669"/>
    <property type="project" value="UniProtKB-UniRule"/>
</dbReference>
<dbReference type="GO" id="GO:0009102">
    <property type="term" value="P:biotin biosynthetic process"/>
    <property type="evidence" value="ECO:0007669"/>
    <property type="project" value="UniProtKB-UniRule"/>
</dbReference>
<dbReference type="CDD" id="cd03109">
    <property type="entry name" value="DTBS"/>
    <property type="match status" value="1"/>
</dbReference>
<dbReference type="Gene3D" id="3.40.50.300">
    <property type="entry name" value="P-loop containing nucleotide triphosphate hydrolases"/>
    <property type="match status" value="1"/>
</dbReference>
<dbReference type="HAMAP" id="MF_00336">
    <property type="entry name" value="BioD"/>
    <property type="match status" value="1"/>
</dbReference>
<dbReference type="InterPro" id="IPR004472">
    <property type="entry name" value="DTB_synth_BioD"/>
</dbReference>
<dbReference type="InterPro" id="IPR027417">
    <property type="entry name" value="P-loop_NTPase"/>
</dbReference>
<dbReference type="NCBIfam" id="TIGR00347">
    <property type="entry name" value="bioD"/>
    <property type="match status" value="1"/>
</dbReference>
<dbReference type="PANTHER" id="PTHR43210:SF2">
    <property type="entry name" value="ATP-DEPENDENT DETHIOBIOTIN SYNTHETASE BIOD 2"/>
    <property type="match status" value="1"/>
</dbReference>
<dbReference type="PANTHER" id="PTHR43210">
    <property type="entry name" value="DETHIOBIOTIN SYNTHETASE"/>
    <property type="match status" value="1"/>
</dbReference>
<dbReference type="Pfam" id="PF13500">
    <property type="entry name" value="AAA_26"/>
    <property type="match status" value="1"/>
</dbReference>
<dbReference type="PIRSF" id="PIRSF006755">
    <property type="entry name" value="DTB_synth"/>
    <property type="match status" value="1"/>
</dbReference>
<dbReference type="SUPFAM" id="SSF52540">
    <property type="entry name" value="P-loop containing nucleoside triphosphate hydrolases"/>
    <property type="match status" value="1"/>
</dbReference>
<name>BIOD_CLOBB</name>
<keyword id="KW-0067">ATP-binding</keyword>
<keyword id="KW-0093">Biotin biosynthesis</keyword>
<keyword id="KW-0963">Cytoplasm</keyword>
<keyword id="KW-0436">Ligase</keyword>
<keyword id="KW-0460">Magnesium</keyword>
<keyword id="KW-0479">Metal-binding</keyword>
<keyword id="KW-0547">Nucleotide-binding</keyword>
<protein>
    <recommendedName>
        <fullName evidence="1">ATP-dependent dethiobiotin synthetase BioD</fullName>
        <ecNumber evidence="1">6.3.3.3</ecNumber>
    </recommendedName>
    <alternativeName>
        <fullName evidence="1">DTB synthetase</fullName>
        <shortName evidence="1">DTBS</shortName>
    </alternativeName>
    <alternativeName>
        <fullName evidence="1">Dethiobiotin synthase</fullName>
    </alternativeName>
</protein>
<sequence>MAKGVFITATNTDIGKTYITALIVKKLREANINCGYYKAALSGAEIINNNIVAGDAKYVYNVANIKGNPNECVSYIFKQAVSPHLAAKLNNVHISMDKIVADFNYRCNEHDYITVEGSGGIICPIYYDKEKIMLTDIIKKLKIPIILVSPSGLGSINGTILTLEYIKKHNLVVNSIILNNYDKSNIIHIDNKRILEEMTNLPVYTCEQYSEDIDIPLKELKQFYDFI</sequence>
<proteinExistence type="inferred from homology"/>
<accession>B2TL74</accession>
<evidence type="ECO:0000255" key="1">
    <source>
        <dbReference type="HAMAP-Rule" id="MF_00336"/>
    </source>
</evidence>
<feature type="chain" id="PRO_1000119866" description="ATP-dependent dethiobiotin synthetase BioD">
    <location>
        <begin position="1"/>
        <end position="227"/>
    </location>
</feature>
<feature type="active site" evidence="1">
    <location>
        <position position="38"/>
    </location>
</feature>
<feature type="binding site" evidence="1">
    <location>
        <begin position="13"/>
        <end position="18"/>
    </location>
    <ligand>
        <name>ATP</name>
        <dbReference type="ChEBI" id="CHEBI:30616"/>
    </ligand>
</feature>
<feature type="binding site" evidence="1">
    <location>
        <position position="17"/>
    </location>
    <ligand>
        <name>Mg(2+)</name>
        <dbReference type="ChEBI" id="CHEBI:18420"/>
    </ligand>
</feature>
<feature type="binding site" evidence="1">
    <location>
        <position position="42"/>
    </location>
    <ligand>
        <name>substrate</name>
    </ligand>
</feature>
<feature type="binding site" evidence="1">
    <location>
        <position position="55"/>
    </location>
    <ligand>
        <name>ATP</name>
        <dbReference type="ChEBI" id="CHEBI:30616"/>
    </ligand>
</feature>
<feature type="binding site" evidence="1">
    <location>
        <position position="55"/>
    </location>
    <ligand>
        <name>Mg(2+)</name>
        <dbReference type="ChEBI" id="CHEBI:18420"/>
    </ligand>
</feature>
<feature type="binding site" evidence="1">
    <location>
        <begin position="116"/>
        <end position="119"/>
    </location>
    <ligand>
        <name>ATP</name>
        <dbReference type="ChEBI" id="CHEBI:30616"/>
    </ligand>
</feature>
<feature type="binding site" evidence="1">
    <location>
        <position position="116"/>
    </location>
    <ligand>
        <name>Mg(2+)</name>
        <dbReference type="ChEBI" id="CHEBI:18420"/>
    </ligand>
</feature>
<feature type="binding site" evidence="1">
    <location>
        <begin position="179"/>
        <end position="180"/>
    </location>
    <ligand>
        <name>ATP</name>
        <dbReference type="ChEBI" id="CHEBI:30616"/>
    </ligand>
</feature>